<keyword id="KW-0067">ATP-binding</keyword>
<keyword id="KW-0963">Cytoplasm</keyword>
<keyword id="KW-0436">Ligase</keyword>
<keyword id="KW-0460">Magnesium</keyword>
<keyword id="KW-0479">Metal-binding</keyword>
<keyword id="KW-0547">Nucleotide-binding</keyword>
<keyword id="KW-0658">Purine biosynthesis</keyword>
<keyword id="KW-1185">Reference proteome</keyword>
<name>PURL_GLOVI</name>
<feature type="chain" id="PRO_0000100456" description="Phosphoribosylformylglycinamidine synthase subunit PurL">
    <location>
        <begin position="1"/>
        <end position="774"/>
    </location>
</feature>
<feature type="active site" evidence="1">
    <location>
        <position position="51"/>
    </location>
</feature>
<feature type="active site" description="Proton acceptor" evidence="1">
    <location>
        <position position="97"/>
    </location>
</feature>
<feature type="binding site" evidence="1">
    <location>
        <position position="54"/>
    </location>
    <ligand>
        <name>ATP</name>
        <dbReference type="ChEBI" id="CHEBI:30616"/>
    </ligand>
</feature>
<feature type="binding site" evidence="1">
    <location>
        <position position="93"/>
    </location>
    <ligand>
        <name>ATP</name>
        <dbReference type="ChEBI" id="CHEBI:30616"/>
    </ligand>
</feature>
<feature type="binding site" evidence="1">
    <location>
        <position position="95"/>
    </location>
    <ligand>
        <name>Mg(2+)</name>
        <dbReference type="ChEBI" id="CHEBI:18420"/>
        <label>1</label>
    </ligand>
</feature>
<feature type="binding site" evidence="1">
    <location>
        <begin position="96"/>
        <end position="99"/>
    </location>
    <ligand>
        <name>substrate</name>
    </ligand>
</feature>
<feature type="binding site" evidence="1">
    <location>
        <position position="118"/>
    </location>
    <ligand>
        <name>substrate</name>
    </ligand>
</feature>
<feature type="binding site" evidence="1">
    <location>
        <position position="119"/>
    </location>
    <ligand>
        <name>Mg(2+)</name>
        <dbReference type="ChEBI" id="CHEBI:18420"/>
        <label>2</label>
    </ligand>
</feature>
<feature type="binding site" evidence="1">
    <location>
        <position position="242"/>
    </location>
    <ligand>
        <name>substrate</name>
    </ligand>
</feature>
<feature type="binding site" evidence="1">
    <location>
        <position position="270"/>
    </location>
    <ligand>
        <name>Mg(2+)</name>
        <dbReference type="ChEBI" id="CHEBI:18420"/>
        <label>2</label>
    </ligand>
</feature>
<feature type="binding site" evidence="1">
    <location>
        <begin position="314"/>
        <end position="316"/>
    </location>
    <ligand>
        <name>substrate</name>
    </ligand>
</feature>
<feature type="binding site" evidence="1">
    <location>
        <position position="514"/>
    </location>
    <ligand>
        <name>ATP</name>
        <dbReference type="ChEBI" id="CHEBI:30616"/>
    </ligand>
</feature>
<feature type="binding site" evidence="1">
    <location>
        <position position="551"/>
    </location>
    <ligand>
        <name>ATP</name>
        <dbReference type="ChEBI" id="CHEBI:30616"/>
    </ligand>
</feature>
<feature type="binding site" evidence="1">
    <location>
        <position position="552"/>
    </location>
    <ligand>
        <name>Mg(2+)</name>
        <dbReference type="ChEBI" id="CHEBI:18420"/>
        <label>1</label>
    </ligand>
</feature>
<feature type="binding site" evidence="1">
    <location>
        <position position="554"/>
    </location>
    <ligand>
        <name>substrate</name>
    </ligand>
</feature>
<reference key="1">
    <citation type="journal article" date="2003" name="DNA Res.">
        <title>Complete genome structure of Gloeobacter violaceus PCC 7421, a cyanobacterium that lacks thylakoids.</title>
        <authorList>
            <person name="Nakamura Y."/>
            <person name="Kaneko T."/>
            <person name="Sato S."/>
            <person name="Mimuro M."/>
            <person name="Miyashita H."/>
            <person name="Tsuchiya T."/>
            <person name="Sasamoto S."/>
            <person name="Watanabe A."/>
            <person name="Kawashima K."/>
            <person name="Kishida Y."/>
            <person name="Kiyokawa C."/>
            <person name="Kohara M."/>
            <person name="Matsumoto M."/>
            <person name="Matsuno A."/>
            <person name="Nakazaki N."/>
            <person name="Shimpo S."/>
            <person name="Takeuchi C."/>
            <person name="Yamada M."/>
            <person name="Tabata S."/>
        </authorList>
    </citation>
    <scope>NUCLEOTIDE SEQUENCE [LARGE SCALE GENOMIC DNA]</scope>
    <source>
        <strain>ATCC 29082 / PCC 7421</strain>
    </source>
</reference>
<sequence length="774" mass="82656">MTAPTESSPFSPADLARHRLSPQEYRRITELIGRHPNLNELGMFSVMWSEHCCYKNSRPLLKGFPTTGPRVLVGPGENAGVIDIGDGLRVAFKIESHNHPSAVEPFQGAATGVGGILRDIFTMGARPIASLNSLRFGPLEDARNRALFRGVVHGIGHYGNCVGVPTVGGEVYFDPTYSGNPLVNAMAIGVLETPEIVRSGAAGIGNPVLYVGSTTGRDGMGGASFASAELSDASQKDRPAVQVGDPFTEKSLIEACLEAFRTGAVVAAQDMGAAGLTCSSSEMAAKGGVGIEMDLDLVPVRETGMVPYEFLLSESQERMLFVAEKGREGELIALFERWGLHAVVVGRVIGEPLVRIFHSGKVVAELPARALTDDAPVYPRAVLPEPPAAILKLRAFDWHSLAEPTDYAEALLTLLDSPTIGSKSWVYRQYDHQVQNNTVIVPGAADAAVIRVRPQSFGPGEVEAVPFTERGIAATVDCNSRYVYLDPYRGAMLAVAEAARNLSCVGATPLAVTDNLNFGSPEKPEGYWQLAMACRGIADACLELMTPVTGGNVSLYNETQSDGRTTAIYPTPTIGMVGLVEDIHRTCSQNFKSPGDLVYLLGGGEPTLGGSEYLACLHGVAAGEPPVLDMALEIQVQSVCRLGIERGLFKSAHDVAEGGLAVALAECCITGNLGLDAVLGANHPRADVVCFGEMAAAIIVTIDPCDQVACELWLECSLAERWKLLGTVAAQSFDLRVENRDCRISTSCERLKTTFEQAIPRRMEHIPVTEAPQR</sequence>
<gene>
    <name evidence="1" type="primary">purL</name>
    <name type="ordered locus">glr2113</name>
</gene>
<protein>
    <recommendedName>
        <fullName evidence="1">Phosphoribosylformylglycinamidine synthase subunit PurL</fullName>
        <shortName evidence="1">FGAM synthase</shortName>
        <ecNumber evidence="1">6.3.5.3</ecNumber>
    </recommendedName>
    <alternativeName>
        <fullName evidence="1">Formylglycinamide ribonucleotide amidotransferase subunit II</fullName>
        <shortName evidence="1">FGAR amidotransferase II</shortName>
        <shortName evidence="1">FGAR-AT II</shortName>
    </alternativeName>
    <alternativeName>
        <fullName evidence="1">Glutamine amidotransferase PurL</fullName>
    </alternativeName>
    <alternativeName>
        <fullName evidence="1">Phosphoribosylformylglycinamidine synthase subunit II</fullName>
    </alternativeName>
</protein>
<accession>Q7NIR9</accession>
<evidence type="ECO:0000255" key="1">
    <source>
        <dbReference type="HAMAP-Rule" id="MF_00420"/>
    </source>
</evidence>
<organism>
    <name type="scientific">Gloeobacter violaceus (strain ATCC 29082 / PCC 7421)</name>
    <dbReference type="NCBI Taxonomy" id="251221"/>
    <lineage>
        <taxon>Bacteria</taxon>
        <taxon>Bacillati</taxon>
        <taxon>Cyanobacteriota</taxon>
        <taxon>Cyanophyceae</taxon>
        <taxon>Gloeobacterales</taxon>
        <taxon>Gloeobacteraceae</taxon>
        <taxon>Gloeobacter</taxon>
    </lineage>
</organism>
<comment type="function">
    <text evidence="1">Part of the phosphoribosylformylglycinamidine synthase complex involved in the purines biosynthetic pathway. Catalyzes the ATP-dependent conversion of formylglycinamide ribonucleotide (FGAR) and glutamine to yield formylglycinamidine ribonucleotide (FGAM) and glutamate. The FGAM synthase complex is composed of three subunits. PurQ produces an ammonia molecule by converting glutamine to glutamate. PurL transfers the ammonia molecule to FGAR to form FGAM in an ATP-dependent manner. PurS interacts with PurQ and PurL and is thought to assist in the transfer of the ammonia molecule from PurQ to PurL.</text>
</comment>
<comment type="catalytic activity">
    <reaction evidence="1">
        <text>N(2)-formyl-N(1)-(5-phospho-beta-D-ribosyl)glycinamide + L-glutamine + ATP + H2O = 2-formamido-N(1)-(5-O-phospho-beta-D-ribosyl)acetamidine + L-glutamate + ADP + phosphate + H(+)</text>
        <dbReference type="Rhea" id="RHEA:17129"/>
        <dbReference type="ChEBI" id="CHEBI:15377"/>
        <dbReference type="ChEBI" id="CHEBI:15378"/>
        <dbReference type="ChEBI" id="CHEBI:29985"/>
        <dbReference type="ChEBI" id="CHEBI:30616"/>
        <dbReference type="ChEBI" id="CHEBI:43474"/>
        <dbReference type="ChEBI" id="CHEBI:58359"/>
        <dbReference type="ChEBI" id="CHEBI:147286"/>
        <dbReference type="ChEBI" id="CHEBI:147287"/>
        <dbReference type="ChEBI" id="CHEBI:456216"/>
        <dbReference type="EC" id="6.3.5.3"/>
    </reaction>
</comment>
<comment type="pathway">
    <text evidence="1">Purine metabolism; IMP biosynthesis via de novo pathway; 5-amino-1-(5-phospho-D-ribosyl)imidazole from N(2)-formyl-N(1)-(5-phospho-D-ribosyl)glycinamide: step 1/2.</text>
</comment>
<comment type="subunit">
    <text evidence="1">Monomer. Part of the FGAM synthase complex composed of 1 PurL, 1 PurQ and 2 PurS subunits.</text>
</comment>
<comment type="subcellular location">
    <subcellularLocation>
        <location evidence="1">Cytoplasm</location>
    </subcellularLocation>
</comment>
<comment type="similarity">
    <text evidence="1">Belongs to the FGAMS family.</text>
</comment>
<dbReference type="EC" id="6.3.5.3" evidence="1"/>
<dbReference type="EMBL" id="BA000045">
    <property type="protein sequence ID" value="BAC90054.1"/>
    <property type="molecule type" value="Genomic_DNA"/>
</dbReference>
<dbReference type="RefSeq" id="NP_925059.1">
    <property type="nucleotide sequence ID" value="NC_005125.1"/>
</dbReference>
<dbReference type="RefSeq" id="WP_011142111.1">
    <property type="nucleotide sequence ID" value="NC_005125.1"/>
</dbReference>
<dbReference type="SMR" id="Q7NIR9"/>
<dbReference type="FunCoup" id="Q7NIR9">
    <property type="interactions" value="253"/>
</dbReference>
<dbReference type="STRING" id="251221.gene:10759607"/>
<dbReference type="EnsemblBacteria" id="BAC90054">
    <property type="protein sequence ID" value="BAC90054"/>
    <property type="gene ID" value="BAC90054"/>
</dbReference>
<dbReference type="KEGG" id="gvi:glr2113"/>
<dbReference type="PATRIC" id="fig|251221.4.peg.2148"/>
<dbReference type="eggNOG" id="COG0046">
    <property type="taxonomic scope" value="Bacteria"/>
</dbReference>
<dbReference type="HOGENOM" id="CLU_003100_0_1_3"/>
<dbReference type="InParanoid" id="Q7NIR9"/>
<dbReference type="OrthoDB" id="9804441at2"/>
<dbReference type="PhylomeDB" id="Q7NIR9"/>
<dbReference type="UniPathway" id="UPA00074">
    <property type="reaction ID" value="UER00128"/>
</dbReference>
<dbReference type="Proteomes" id="UP000000557">
    <property type="component" value="Chromosome"/>
</dbReference>
<dbReference type="GO" id="GO:0005737">
    <property type="term" value="C:cytoplasm"/>
    <property type="evidence" value="ECO:0007669"/>
    <property type="project" value="UniProtKB-SubCell"/>
</dbReference>
<dbReference type="GO" id="GO:0005524">
    <property type="term" value="F:ATP binding"/>
    <property type="evidence" value="ECO:0007669"/>
    <property type="project" value="UniProtKB-UniRule"/>
</dbReference>
<dbReference type="GO" id="GO:0000287">
    <property type="term" value="F:magnesium ion binding"/>
    <property type="evidence" value="ECO:0007669"/>
    <property type="project" value="UniProtKB-UniRule"/>
</dbReference>
<dbReference type="GO" id="GO:0004642">
    <property type="term" value="F:phosphoribosylformylglycinamidine synthase activity"/>
    <property type="evidence" value="ECO:0000318"/>
    <property type="project" value="GO_Central"/>
</dbReference>
<dbReference type="GO" id="GO:0006189">
    <property type="term" value="P:'de novo' IMP biosynthetic process"/>
    <property type="evidence" value="ECO:0007669"/>
    <property type="project" value="UniProtKB-UniRule"/>
</dbReference>
<dbReference type="GO" id="GO:0006164">
    <property type="term" value="P:purine nucleotide biosynthetic process"/>
    <property type="evidence" value="ECO:0000318"/>
    <property type="project" value="GO_Central"/>
</dbReference>
<dbReference type="CDD" id="cd02203">
    <property type="entry name" value="PurL_repeat1"/>
    <property type="match status" value="1"/>
</dbReference>
<dbReference type="CDD" id="cd02204">
    <property type="entry name" value="PurL_repeat2"/>
    <property type="match status" value="1"/>
</dbReference>
<dbReference type="FunFam" id="3.30.1330.10:FF:000004">
    <property type="entry name" value="Phosphoribosylformylglycinamidine synthase subunit PurL"/>
    <property type="match status" value="1"/>
</dbReference>
<dbReference type="Gene3D" id="3.90.650.10">
    <property type="entry name" value="PurM-like C-terminal domain"/>
    <property type="match status" value="2"/>
</dbReference>
<dbReference type="Gene3D" id="3.30.1330.10">
    <property type="entry name" value="PurM-like, N-terminal domain"/>
    <property type="match status" value="2"/>
</dbReference>
<dbReference type="HAMAP" id="MF_00420">
    <property type="entry name" value="PurL_2"/>
    <property type="match status" value="1"/>
</dbReference>
<dbReference type="InterPro" id="IPR010074">
    <property type="entry name" value="PRibForGlyAmidine_synth_PurL"/>
</dbReference>
<dbReference type="InterPro" id="IPR041609">
    <property type="entry name" value="PurL_linker"/>
</dbReference>
<dbReference type="InterPro" id="IPR010918">
    <property type="entry name" value="PurM-like_C_dom"/>
</dbReference>
<dbReference type="InterPro" id="IPR036676">
    <property type="entry name" value="PurM-like_C_sf"/>
</dbReference>
<dbReference type="InterPro" id="IPR016188">
    <property type="entry name" value="PurM-like_N"/>
</dbReference>
<dbReference type="InterPro" id="IPR036921">
    <property type="entry name" value="PurM-like_N_sf"/>
</dbReference>
<dbReference type="NCBIfam" id="TIGR01736">
    <property type="entry name" value="FGAM_synth_II"/>
    <property type="match status" value="1"/>
</dbReference>
<dbReference type="NCBIfam" id="NF002290">
    <property type="entry name" value="PRK01213.1"/>
    <property type="match status" value="1"/>
</dbReference>
<dbReference type="PANTHER" id="PTHR43555">
    <property type="entry name" value="PHOSPHORIBOSYLFORMYLGLYCINAMIDINE SYNTHASE SUBUNIT PURL"/>
    <property type="match status" value="1"/>
</dbReference>
<dbReference type="PANTHER" id="PTHR43555:SF1">
    <property type="entry name" value="PHOSPHORIBOSYLFORMYLGLYCINAMIDINE SYNTHASE SUBUNIT PURL"/>
    <property type="match status" value="1"/>
</dbReference>
<dbReference type="Pfam" id="PF00586">
    <property type="entry name" value="AIRS"/>
    <property type="match status" value="2"/>
</dbReference>
<dbReference type="Pfam" id="PF02769">
    <property type="entry name" value="AIRS_C"/>
    <property type="match status" value="2"/>
</dbReference>
<dbReference type="Pfam" id="PF18072">
    <property type="entry name" value="FGAR-AT_linker"/>
    <property type="match status" value="1"/>
</dbReference>
<dbReference type="PIRSF" id="PIRSF001587">
    <property type="entry name" value="FGAM_synthase_II"/>
    <property type="match status" value="1"/>
</dbReference>
<dbReference type="SUPFAM" id="SSF56042">
    <property type="entry name" value="PurM C-terminal domain-like"/>
    <property type="match status" value="2"/>
</dbReference>
<dbReference type="SUPFAM" id="SSF55326">
    <property type="entry name" value="PurM N-terminal domain-like"/>
    <property type="match status" value="2"/>
</dbReference>
<proteinExistence type="inferred from homology"/>